<accession>Q54CK6</accession>
<evidence type="ECO:0000250" key="1"/>
<evidence type="ECO:0000250" key="2">
    <source>
        <dbReference type="UniProtKB" id="Q9JI51"/>
    </source>
</evidence>
<evidence type="ECO:0000255" key="3"/>
<evidence type="ECO:0000255" key="4">
    <source>
        <dbReference type="PROSITE-ProRule" id="PRU00202"/>
    </source>
</evidence>
<evidence type="ECO:0000256" key="5">
    <source>
        <dbReference type="SAM" id="MobiDB-lite"/>
    </source>
</evidence>
<evidence type="ECO:0000269" key="6">
    <source>
    </source>
</evidence>
<evidence type="ECO:0000269" key="7">
    <source>
    </source>
</evidence>
<evidence type="ECO:0000305" key="8"/>
<evidence type="ECO:0000312" key="9">
    <source>
        <dbReference type="dictyBase" id="DDB_G0292974"/>
    </source>
</evidence>
<evidence type="ECO:0000312" key="10">
    <source>
        <dbReference type="EMBL" id="EAL61036.1"/>
    </source>
</evidence>
<dbReference type="EMBL" id="AAFI02000197">
    <property type="protein sequence ID" value="EAL61036.1"/>
    <property type="molecule type" value="Genomic_DNA"/>
</dbReference>
<dbReference type="RefSeq" id="XP_629410.1">
    <property type="nucleotide sequence ID" value="XM_629408.1"/>
</dbReference>
<dbReference type="SMR" id="Q54CK6"/>
<dbReference type="FunCoup" id="Q54CK6">
    <property type="interactions" value="614"/>
</dbReference>
<dbReference type="IntAct" id="Q54CK6">
    <property type="interactions" value="1"/>
</dbReference>
<dbReference type="STRING" id="44689.Q54CK6"/>
<dbReference type="PaxDb" id="44689-DDB0231536"/>
<dbReference type="EnsemblProtists" id="EAL61036">
    <property type="protein sequence ID" value="EAL61036"/>
    <property type="gene ID" value="DDB_G0292974"/>
</dbReference>
<dbReference type="GeneID" id="8628929"/>
<dbReference type="KEGG" id="ddi:DDB_G0292974"/>
<dbReference type="dictyBase" id="DDB_G0292974">
    <property type="gene designation" value="vti1A"/>
</dbReference>
<dbReference type="VEuPathDB" id="AmoebaDB:DDB_G0292974"/>
<dbReference type="eggNOG" id="KOG1666">
    <property type="taxonomic scope" value="Eukaryota"/>
</dbReference>
<dbReference type="HOGENOM" id="CLU_075474_0_1_1"/>
<dbReference type="InParanoid" id="Q54CK6"/>
<dbReference type="OMA" id="YRRVMTN"/>
<dbReference type="PhylomeDB" id="Q54CK6"/>
<dbReference type="Reactome" id="R-DDI-114608">
    <property type="pathway name" value="Platelet degranulation"/>
</dbReference>
<dbReference type="Reactome" id="R-DDI-6811438">
    <property type="pathway name" value="Intra-Golgi traffic"/>
</dbReference>
<dbReference type="Reactome" id="R-DDI-6811440">
    <property type="pathway name" value="Retrograde transport at the Trans-Golgi-Network"/>
</dbReference>
<dbReference type="PRO" id="PR:Q54CK6"/>
<dbReference type="Proteomes" id="UP000002195">
    <property type="component" value="Chromosome 6"/>
</dbReference>
<dbReference type="GO" id="GO:0030665">
    <property type="term" value="C:clathrin-coated vesicle membrane"/>
    <property type="evidence" value="ECO:0007669"/>
    <property type="project" value="UniProtKB-SubCell"/>
</dbReference>
<dbReference type="GO" id="GO:0000331">
    <property type="term" value="C:contractile vacuole"/>
    <property type="evidence" value="ECO:0000314"/>
    <property type="project" value="dictyBase"/>
</dbReference>
<dbReference type="GO" id="GO:0005789">
    <property type="term" value="C:endoplasmic reticulum membrane"/>
    <property type="evidence" value="ECO:0000318"/>
    <property type="project" value="GO_Central"/>
</dbReference>
<dbReference type="GO" id="GO:0005768">
    <property type="term" value="C:endosome"/>
    <property type="evidence" value="ECO:0000314"/>
    <property type="project" value="dictyBase"/>
</dbReference>
<dbReference type="GO" id="GO:0010008">
    <property type="term" value="C:endosome membrane"/>
    <property type="evidence" value="ECO:0000314"/>
    <property type="project" value="UniProtKB"/>
</dbReference>
<dbReference type="GO" id="GO:0012507">
    <property type="term" value="C:ER to Golgi transport vesicle membrane"/>
    <property type="evidence" value="ECO:0000318"/>
    <property type="project" value="GO_Central"/>
</dbReference>
<dbReference type="GO" id="GO:0005794">
    <property type="term" value="C:Golgi apparatus"/>
    <property type="evidence" value="ECO:0000318"/>
    <property type="project" value="GO_Central"/>
</dbReference>
<dbReference type="GO" id="GO:0031902">
    <property type="term" value="C:late endosome membrane"/>
    <property type="evidence" value="ECO:0000318"/>
    <property type="project" value="GO_Central"/>
</dbReference>
<dbReference type="GO" id="GO:0045335">
    <property type="term" value="C:phagocytic vesicle"/>
    <property type="evidence" value="ECO:0000314"/>
    <property type="project" value="dictyBase"/>
</dbReference>
<dbReference type="GO" id="GO:0032010">
    <property type="term" value="C:phagolysosome"/>
    <property type="evidence" value="ECO:0000314"/>
    <property type="project" value="dictyBase"/>
</dbReference>
<dbReference type="GO" id="GO:0031201">
    <property type="term" value="C:SNARE complex"/>
    <property type="evidence" value="ECO:0000314"/>
    <property type="project" value="dictyBase"/>
</dbReference>
<dbReference type="GO" id="GO:0005484">
    <property type="term" value="F:SNAP receptor activity"/>
    <property type="evidence" value="ECO:0000318"/>
    <property type="project" value="GO_Central"/>
</dbReference>
<dbReference type="GO" id="GO:0000149">
    <property type="term" value="F:SNARE binding"/>
    <property type="evidence" value="ECO:0000318"/>
    <property type="project" value="GO_Central"/>
</dbReference>
<dbReference type="GO" id="GO:0006971">
    <property type="term" value="P:hypotonic response"/>
    <property type="evidence" value="ECO:0007007"/>
    <property type="project" value="dictyBase"/>
</dbReference>
<dbReference type="GO" id="GO:0006886">
    <property type="term" value="P:intracellular protein transport"/>
    <property type="evidence" value="ECO:0007669"/>
    <property type="project" value="InterPro"/>
</dbReference>
<dbReference type="GO" id="GO:0006906">
    <property type="term" value="P:vesicle fusion"/>
    <property type="evidence" value="ECO:0000314"/>
    <property type="project" value="UniProtKB"/>
</dbReference>
<dbReference type="GO" id="GO:0016192">
    <property type="term" value="P:vesicle-mediated transport"/>
    <property type="evidence" value="ECO:0000314"/>
    <property type="project" value="UniProtKB"/>
</dbReference>
<dbReference type="CDD" id="cd15890">
    <property type="entry name" value="SNARE_Vti1b"/>
    <property type="match status" value="1"/>
</dbReference>
<dbReference type="FunFam" id="1.20.5.110:FF:000002">
    <property type="entry name" value="Vesicle transport through interaction with t-SNAREsB"/>
    <property type="match status" value="1"/>
</dbReference>
<dbReference type="Gene3D" id="1.20.5.110">
    <property type="match status" value="1"/>
</dbReference>
<dbReference type="Gene3D" id="1.20.58.400">
    <property type="entry name" value="t-snare proteins"/>
    <property type="match status" value="1"/>
</dbReference>
<dbReference type="InterPro" id="IPR010989">
    <property type="entry name" value="SNARE"/>
</dbReference>
<dbReference type="InterPro" id="IPR000727">
    <property type="entry name" value="T_SNARE_dom"/>
</dbReference>
<dbReference type="InterPro" id="IPR038407">
    <property type="entry name" value="v-SNARE_N_sf"/>
</dbReference>
<dbReference type="InterPro" id="IPR007705">
    <property type="entry name" value="Vesicle_trsprt_v-SNARE_N"/>
</dbReference>
<dbReference type="PANTHER" id="PTHR21230:SF26">
    <property type="entry name" value="VESICLE TRANSPORT THROUGH INTERACTION WITH T-SNARES HOMOLOG 1A"/>
    <property type="match status" value="1"/>
</dbReference>
<dbReference type="PANTHER" id="PTHR21230">
    <property type="entry name" value="VESICLE TRANSPORT V-SNARE PROTEIN VTI1-RELATED"/>
    <property type="match status" value="1"/>
</dbReference>
<dbReference type="Pfam" id="PF05008">
    <property type="entry name" value="V-SNARE"/>
    <property type="match status" value="1"/>
</dbReference>
<dbReference type="Pfam" id="PF12352">
    <property type="entry name" value="V-SNARE_C"/>
    <property type="match status" value="1"/>
</dbReference>
<dbReference type="SMART" id="SM00397">
    <property type="entry name" value="t_SNARE"/>
    <property type="match status" value="1"/>
</dbReference>
<dbReference type="SUPFAM" id="SSF58038">
    <property type="entry name" value="SNARE fusion complex"/>
    <property type="match status" value="1"/>
</dbReference>
<dbReference type="SUPFAM" id="SSF47661">
    <property type="entry name" value="t-snare proteins"/>
    <property type="match status" value="1"/>
</dbReference>
<dbReference type="PROSITE" id="PS50192">
    <property type="entry name" value="T_SNARE"/>
    <property type="match status" value="1"/>
</dbReference>
<feature type="chain" id="PRO_0000319996" description="Vesicle transport through interaction with t-SNAREs homolog 1A">
    <location>
        <begin position="1"/>
        <end position="217"/>
    </location>
</feature>
<feature type="topological domain" description="Cytoplasmic" evidence="2 3">
    <location>
        <begin position="1"/>
        <end position="192"/>
    </location>
</feature>
<feature type="transmembrane region" description="Helical; Anchor for type IV membrane protein">
    <location>
        <begin position="193"/>
        <end position="213"/>
    </location>
</feature>
<feature type="topological domain" description="Vesicular" evidence="2 3">
    <location>
        <begin position="214"/>
        <end position="217"/>
    </location>
</feature>
<feature type="domain" description="t-SNARE coiled-coil homology" evidence="4">
    <location>
        <begin position="123"/>
        <end position="185"/>
    </location>
</feature>
<feature type="region of interest" description="Disordered" evidence="5">
    <location>
        <begin position="90"/>
        <end position="109"/>
    </location>
</feature>
<feature type="coiled-coil region" evidence="3">
    <location>
        <begin position="36"/>
        <end position="97"/>
    </location>
</feature>
<protein>
    <recommendedName>
        <fullName>Vesicle transport through interaction with t-SNAREs homolog 1A</fullName>
    </recommendedName>
</protein>
<comment type="function">
    <text evidence="2 7">V-SNARE that mediates vesicle transport pathways through interactions with t-SNAREs on the target membrane. These interactions are proposed to mediate aspects of the specificity of vesicle trafficking and to promote fusion of the lipid bilayers.</text>
</comment>
<comment type="subunit">
    <text evidence="7">Component of the SNARE complex composed of syn7A, syn8A, vamp7A and vti1A.</text>
</comment>
<comment type="subcellular location">
    <subcellularLocation>
        <location evidence="7">Membrane</location>
        <topology evidence="7">Single-pass type IV membrane protein</topology>
    </subcellularLocation>
    <subcellularLocation>
        <location evidence="7">Cytoplasmic vesicle</location>
        <location evidence="7">Secretory vesicle membrane</location>
        <topology evidence="7">Single-pass type IV membrane protein</topology>
    </subcellularLocation>
    <subcellularLocation>
        <location evidence="2 3">Cytoplasmic vesicle</location>
        <location evidence="2 3">Clathrin-coated vesicle membrane</location>
        <topology evidence="2 3">Single-pass type IV membrane protein</topology>
    </subcellularLocation>
    <subcellularLocation>
        <location evidence="7">Endosome membrane</location>
        <topology evidence="7">Single-pass type IV membrane protein</topology>
    </subcellularLocation>
    <subcellularLocation>
        <location evidence="1">Endoplasmic reticulum membrane</location>
        <topology evidence="2 3">Single-pass type IV membrane protein</topology>
    </subcellularLocation>
</comment>
<comment type="developmental stage">
    <text evidence="6">Expressed during development. Expression levels peak at 2 hours, after which they decrease steadily until culmination. Levels increase after 18 hours of development.</text>
</comment>
<comment type="similarity">
    <text evidence="3">Belongs to the VTI1 family.</text>
</comment>
<reference evidence="10" key="1">
    <citation type="journal article" date="2005" name="Nature">
        <title>The genome of the social amoeba Dictyostelium discoideum.</title>
        <authorList>
            <person name="Eichinger L."/>
            <person name="Pachebat J.A."/>
            <person name="Gloeckner G."/>
            <person name="Rajandream M.A."/>
            <person name="Sucgang R."/>
            <person name="Berriman M."/>
            <person name="Song J."/>
            <person name="Olsen R."/>
            <person name="Szafranski K."/>
            <person name="Xu Q."/>
            <person name="Tunggal B."/>
            <person name="Kummerfeld S."/>
            <person name="Madera M."/>
            <person name="Konfortov B.A."/>
            <person name="Rivero F."/>
            <person name="Bankier A.T."/>
            <person name="Lehmann R."/>
            <person name="Hamlin N."/>
            <person name="Davies R."/>
            <person name="Gaudet P."/>
            <person name="Fey P."/>
            <person name="Pilcher K."/>
            <person name="Chen G."/>
            <person name="Saunders D."/>
            <person name="Sodergren E.J."/>
            <person name="Davis P."/>
            <person name="Kerhornou A."/>
            <person name="Nie X."/>
            <person name="Hall N."/>
            <person name="Anjard C."/>
            <person name="Hemphill L."/>
            <person name="Bason N."/>
            <person name="Farbrother P."/>
            <person name="Desany B."/>
            <person name="Just E."/>
            <person name="Morio T."/>
            <person name="Rost R."/>
            <person name="Churcher C.M."/>
            <person name="Cooper J."/>
            <person name="Haydock S."/>
            <person name="van Driessche N."/>
            <person name="Cronin A."/>
            <person name="Goodhead I."/>
            <person name="Muzny D.M."/>
            <person name="Mourier T."/>
            <person name="Pain A."/>
            <person name="Lu M."/>
            <person name="Harper D."/>
            <person name="Lindsay R."/>
            <person name="Hauser H."/>
            <person name="James K.D."/>
            <person name="Quiles M."/>
            <person name="Madan Babu M."/>
            <person name="Saito T."/>
            <person name="Buchrieser C."/>
            <person name="Wardroper A."/>
            <person name="Felder M."/>
            <person name="Thangavelu M."/>
            <person name="Johnson D."/>
            <person name="Knights A."/>
            <person name="Loulseged H."/>
            <person name="Mungall K.L."/>
            <person name="Oliver K."/>
            <person name="Price C."/>
            <person name="Quail M.A."/>
            <person name="Urushihara H."/>
            <person name="Hernandez J."/>
            <person name="Rabbinowitsch E."/>
            <person name="Steffen D."/>
            <person name="Sanders M."/>
            <person name="Ma J."/>
            <person name="Kohara Y."/>
            <person name="Sharp S."/>
            <person name="Simmonds M.N."/>
            <person name="Spiegler S."/>
            <person name="Tivey A."/>
            <person name="Sugano S."/>
            <person name="White B."/>
            <person name="Walker D."/>
            <person name="Woodward J.R."/>
            <person name="Winckler T."/>
            <person name="Tanaka Y."/>
            <person name="Shaulsky G."/>
            <person name="Schleicher M."/>
            <person name="Weinstock G.M."/>
            <person name="Rosenthal A."/>
            <person name="Cox E.C."/>
            <person name="Chisholm R.L."/>
            <person name="Gibbs R.A."/>
            <person name="Loomis W.F."/>
            <person name="Platzer M."/>
            <person name="Kay R.R."/>
            <person name="Williams J.G."/>
            <person name="Dear P.H."/>
            <person name="Noegel A.A."/>
            <person name="Barrell B.G."/>
            <person name="Kuspa A."/>
        </authorList>
    </citation>
    <scope>NUCLEOTIDE SEQUENCE [LARGE SCALE GENOMIC DNA]</scope>
    <source>
        <strain>AX4</strain>
    </source>
</reference>
<reference evidence="8" key="2">
    <citation type="journal article" date="2002" name="Biochem. J.">
        <title>Syntaxin 7, syntaxin 8, Vti1 and VAMP7 (vesicle-associated membrane protein 7) form an active SNARE complex for early macropinocytic compartment fusion in Dictyostelium discoideum.</title>
        <authorList>
            <person name="Bogdanovic A."/>
            <person name="Bennett N."/>
            <person name="Kieffer S."/>
            <person name="Louwagie M."/>
            <person name="Morio T."/>
            <person name="Garin J."/>
            <person name="Satre M."/>
            <person name="Bruckert F."/>
        </authorList>
    </citation>
    <scope>PROTEIN SEQUENCE OF 39-49</scope>
    <scope>FUNCTION</scope>
    <scope>IDENTIFICATION IN SNARE COMPLEX</scope>
    <scope>SUBCELLULAR LOCATION</scope>
</reference>
<reference evidence="8" key="3">
    <citation type="journal article" date="2002" name="Development">
        <title>A transcriptional profile of multicellular development in Dictyostelium discoideum.</title>
        <authorList>
            <person name="Van Driessche N."/>
            <person name="Shaw C."/>
            <person name="Katoh M."/>
            <person name="Morio T."/>
            <person name="Sucgang R."/>
            <person name="Ibarra M."/>
            <person name="Kuwayama H."/>
            <person name="Saito T."/>
            <person name="Urushihara H."/>
            <person name="Maeda M."/>
            <person name="Takeuchi I."/>
            <person name="Ochiai H."/>
            <person name="Eaton W."/>
            <person name="Tollett J."/>
            <person name="Halter J."/>
            <person name="Kuspa A."/>
            <person name="Tanaka Y."/>
            <person name="Shaulsky G."/>
        </authorList>
    </citation>
    <scope>DEVELOPMENTAL STAGE</scope>
</reference>
<name>VTI1A_DICDI</name>
<organism>
    <name type="scientific">Dictyostelium discoideum</name>
    <name type="common">Social amoeba</name>
    <dbReference type="NCBI Taxonomy" id="44689"/>
    <lineage>
        <taxon>Eukaryota</taxon>
        <taxon>Amoebozoa</taxon>
        <taxon>Evosea</taxon>
        <taxon>Eumycetozoa</taxon>
        <taxon>Dictyostelia</taxon>
        <taxon>Dictyosteliales</taxon>
        <taxon>Dictyosteliaceae</taxon>
        <taxon>Dictyostelium</taxon>
    </lineage>
</organism>
<keyword id="KW-0175">Coiled coil</keyword>
<keyword id="KW-0968">Cytoplasmic vesicle</keyword>
<keyword id="KW-0903">Direct protein sequencing</keyword>
<keyword id="KW-0256">Endoplasmic reticulum</keyword>
<keyword id="KW-0967">Endosome</keyword>
<keyword id="KW-0472">Membrane</keyword>
<keyword id="KW-0653">Protein transport</keyword>
<keyword id="KW-1185">Reference proteome</keyword>
<keyword id="KW-0735">Signal-anchor</keyword>
<keyword id="KW-0812">Transmembrane</keyword>
<keyword id="KW-1133">Transmembrane helix</keyword>
<keyword id="KW-0813">Transport</keyword>
<sequence>MDVFERTEQNFQHVCNSITRRIKQLPNYGGEKKKIAVREVENDIDEALKFISEMEKLAQNHPQRIKLQTKTKQYHSDIQKYKREVQLAQLQSSNQTNSNPWSNAPDDYQSQYDNQRQHLLQGSNMLDSTSDRLLRTHQISAQSEQIGQNILMDLGKQGEQIRGMRDKLHETDDQIKSARKIMTGIARRLATNKVILSIIILLLMGIIALIICLKWLR</sequence>
<gene>
    <name evidence="10" type="primary">vti1A</name>
    <name evidence="9" type="synonym">vti1</name>
    <name type="ORF">DDB_G0292974</name>
</gene>
<proteinExistence type="evidence at protein level"/>